<keyword id="KW-0002">3D-structure</keyword>
<keyword id="KW-0378">Hydrolase</keyword>
<keyword id="KW-0472">Membrane</keyword>
<keyword id="KW-0645">Protease</keyword>
<keyword id="KW-0964">Secreted</keyword>
<keyword id="KW-0788">Thiol protease</keyword>
<keyword id="KW-0812">Transmembrane</keyword>
<keyword id="KW-1133">Transmembrane helix</keyword>
<keyword id="KW-0833">Ubl conjugation pathway</keyword>
<keyword id="KW-0843">Virulence</keyword>
<sequence length="339" mass="38368">MEPIHNPPPQTCSYSRPSTTYTSFKDASCDTKVTRIIIALFLIVISCGLILCAYTFRDLLDADYLAQEGPQQATKLLQQLDDVLTGPPLPIWDNEHLFQFSCLMQNKHRRVLPIDICNPLTKFNFLECICNCLMTKQSVNVNETDMCELFCPPTCTPENYRRLLCTSSVFPFVMWHDPSADTQEAMLTKMDQTMSSGRVGNSHWVLVIVDIEYRCVTFFDSLCDYVASPQQMREQLEGLAVSLGAIYPKEGGADSDQEELLSPFQVRIGSTVKVQSPGEFTCGAWCCQFLAWYLENPDFDLEEKVPTNPSERRALLADFISTTEQAMSRYSSLSWPTTD</sequence>
<proteinExistence type="evidence at protein level"/>
<reference key="1">
    <citation type="journal article" date="2008" name="Genome Res.">
        <title>Chlamydia trachomatis: genome sequence analysis of lymphogranuloma venereum isolates.</title>
        <authorList>
            <person name="Thomson N.R."/>
            <person name="Holden M.T.G."/>
            <person name="Carder C."/>
            <person name="Lennard N."/>
            <person name="Lockey S.J."/>
            <person name="Marsh P."/>
            <person name="Skipp P."/>
            <person name="O'Connor C.D."/>
            <person name="Goodhead I."/>
            <person name="Norbertzcak H."/>
            <person name="Harris B."/>
            <person name="Ormond D."/>
            <person name="Rance R."/>
            <person name="Quail M.A."/>
            <person name="Parkhill J."/>
            <person name="Stephens R.S."/>
            <person name="Clarke I.N."/>
        </authorList>
    </citation>
    <scope>NUCLEOTIDE SEQUENCE [LARGE SCALE GENOMIC DNA]</scope>
    <source>
        <strain>ATCC VR-902B / DSM 19102 / 434/Bu</strain>
    </source>
</reference>
<feature type="chain" id="PRO_0000396500" description="Deubiquitinase and deneddylase Dub2">
    <location>
        <begin position="1"/>
        <end position="339"/>
    </location>
</feature>
<feature type="transmembrane region" description="Helical" evidence="2">
    <location>
        <begin position="36"/>
        <end position="56"/>
    </location>
</feature>
<feature type="active site" evidence="2">
    <location>
        <position position="203"/>
    </location>
</feature>
<feature type="active site" evidence="2">
    <location>
        <position position="220"/>
    </location>
</feature>
<feature type="active site" evidence="2">
    <location>
        <position position="282"/>
    </location>
</feature>
<feature type="helix" evidence="4">
    <location>
        <begin position="94"/>
        <end position="108"/>
    </location>
</feature>
<feature type="turn" evidence="4">
    <location>
        <begin position="122"/>
        <end position="124"/>
    </location>
</feature>
<feature type="helix" evidence="4">
    <location>
        <begin position="125"/>
        <end position="140"/>
    </location>
</feature>
<feature type="helix" evidence="4">
    <location>
        <begin position="145"/>
        <end position="148"/>
    </location>
</feature>
<feature type="helix" evidence="4">
    <location>
        <begin position="157"/>
        <end position="166"/>
    </location>
</feature>
<feature type="strand" evidence="4">
    <location>
        <begin position="169"/>
        <end position="176"/>
    </location>
</feature>
<feature type="helix" evidence="4">
    <location>
        <begin position="183"/>
        <end position="196"/>
    </location>
</feature>
<feature type="strand" evidence="4">
    <location>
        <begin position="203"/>
        <end position="210"/>
    </location>
</feature>
<feature type="turn" evidence="4">
    <location>
        <begin position="211"/>
        <end position="214"/>
    </location>
</feature>
<feature type="strand" evidence="4">
    <location>
        <begin position="215"/>
        <end position="219"/>
    </location>
</feature>
<feature type="strand" evidence="4">
    <location>
        <begin position="223"/>
        <end position="227"/>
    </location>
</feature>
<feature type="helix" evidence="4">
    <location>
        <begin position="229"/>
        <end position="246"/>
    </location>
</feature>
<feature type="strand" evidence="4">
    <location>
        <begin position="265"/>
        <end position="268"/>
    </location>
</feature>
<feature type="helix" evidence="4">
    <location>
        <begin position="282"/>
        <end position="295"/>
    </location>
</feature>
<feature type="helix" evidence="4">
    <location>
        <begin position="301"/>
        <end position="304"/>
    </location>
</feature>
<feature type="helix" evidence="4">
    <location>
        <begin position="309"/>
        <end position="328"/>
    </location>
</feature>
<evidence type="ECO:0000250" key="1"/>
<evidence type="ECO:0000255" key="2"/>
<evidence type="ECO:0000305" key="3"/>
<evidence type="ECO:0007829" key="4">
    <source>
        <dbReference type="PDB" id="6MRN"/>
    </source>
</evidence>
<protein>
    <recommendedName>
        <fullName>Deubiquitinase and deneddylase Dub2</fullName>
        <shortName>ChlaDub2</shortName>
        <ecNumber>3.4.22.-</ecNumber>
    </recommendedName>
</protein>
<dbReference type="EC" id="3.4.22.-"/>
<dbReference type="EMBL" id="AM884176">
    <property type="protein sequence ID" value="CAP03686.1"/>
    <property type="molecule type" value="Genomic_DNA"/>
</dbReference>
<dbReference type="RefSeq" id="WP_009873474.1">
    <property type="nucleotide sequence ID" value="NC_010287.1"/>
</dbReference>
<dbReference type="RefSeq" id="YP_001654331.1">
    <property type="nucleotide sequence ID" value="NC_010287.1"/>
</dbReference>
<dbReference type="PDB" id="6MRN">
    <property type="method" value="X-ray"/>
    <property type="resolution" value="2.29 A"/>
    <property type="chains" value="A=93-339"/>
</dbReference>
<dbReference type="PDB" id="6OAM">
    <property type="method" value="X-ray"/>
    <property type="resolution" value="2.50 A"/>
    <property type="chains" value="A/B=88-338"/>
</dbReference>
<dbReference type="PDBsum" id="6MRN"/>
<dbReference type="PDBsum" id="6OAM"/>
<dbReference type="SMR" id="B0B999"/>
<dbReference type="MEROPS" id="C48.033"/>
<dbReference type="KEGG" id="ctb:CTL0246"/>
<dbReference type="PATRIC" id="fig|471472.4.peg.263"/>
<dbReference type="HOGENOM" id="CLU_067510_0_0_0"/>
<dbReference type="Proteomes" id="UP001154402">
    <property type="component" value="Chromosome"/>
</dbReference>
<dbReference type="GO" id="GO:0005576">
    <property type="term" value="C:extracellular region"/>
    <property type="evidence" value="ECO:0000250"/>
    <property type="project" value="UniProtKB"/>
</dbReference>
<dbReference type="GO" id="GO:0043657">
    <property type="term" value="C:host cell"/>
    <property type="evidence" value="ECO:0007669"/>
    <property type="project" value="UniProtKB-SubCell"/>
</dbReference>
<dbReference type="GO" id="GO:0016020">
    <property type="term" value="C:membrane"/>
    <property type="evidence" value="ECO:0007669"/>
    <property type="project" value="UniProtKB-SubCell"/>
</dbReference>
<dbReference type="GO" id="GO:0004843">
    <property type="term" value="F:cysteine-type deubiquitinase activity"/>
    <property type="evidence" value="ECO:0000250"/>
    <property type="project" value="UniProtKB"/>
</dbReference>
<dbReference type="GO" id="GO:0019784">
    <property type="term" value="F:deNEDDylase activity"/>
    <property type="evidence" value="ECO:0000250"/>
    <property type="project" value="UniProtKB"/>
</dbReference>
<dbReference type="GO" id="GO:0000338">
    <property type="term" value="P:protein deneddylation"/>
    <property type="evidence" value="ECO:0000250"/>
    <property type="project" value="UniProtKB"/>
</dbReference>
<dbReference type="GO" id="GO:0016579">
    <property type="term" value="P:protein deubiquitination"/>
    <property type="evidence" value="ECO:0000250"/>
    <property type="project" value="UniProtKB"/>
</dbReference>
<dbReference type="GO" id="GO:0006508">
    <property type="term" value="P:proteolysis"/>
    <property type="evidence" value="ECO:0007669"/>
    <property type="project" value="UniProtKB-KW"/>
</dbReference>
<dbReference type="FunFam" id="3.40.395.10:FF:000012">
    <property type="entry name" value="Deubiquitinase and deneddylase Dub2"/>
    <property type="match status" value="1"/>
</dbReference>
<dbReference type="Gene3D" id="3.40.395.10">
    <property type="entry name" value="Adenoviral Proteinase, Chain A"/>
    <property type="match status" value="1"/>
</dbReference>
<dbReference type="InterPro" id="IPR038765">
    <property type="entry name" value="Papain-like_cys_pep_sf"/>
</dbReference>
<dbReference type="InterPro" id="IPR003653">
    <property type="entry name" value="Peptidase_C48_C"/>
</dbReference>
<dbReference type="Pfam" id="PF02902">
    <property type="entry name" value="Peptidase_C48"/>
    <property type="match status" value="1"/>
</dbReference>
<dbReference type="SUPFAM" id="SSF54001">
    <property type="entry name" value="Cysteine proteinases"/>
    <property type="match status" value="1"/>
</dbReference>
<comment type="function">
    <text evidence="1">Effector proteins function to alter host cell physiology and promote bacterial survival in host tissues. This protease possesses deubiquitinating and deneddylating activities (By similarity).</text>
</comment>
<comment type="subcellular location">
    <subcellularLocation>
        <location evidence="1">Secreted</location>
    </subcellularLocation>
    <subcellularLocation>
        <location evidence="1">Host cell</location>
    </subcellularLocation>
    <subcellularLocation>
        <location evidence="1">Membrane</location>
        <topology evidence="1">Single-pass membrane protein</topology>
    </subcellularLocation>
    <text evidence="1">Secreted, and delivered into the host cell.</text>
</comment>
<comment type="similarity">
    <text evidence="3">Belongs to the peptidase C48 family.</text>
</comment>
<name>CDUB2_CHLT2</name>
<organism>
    <name type="scientific">Chlamydia trachomatis serovar L2 (strain ATCC VR-902B / DSM 19102 / 434/Bu)</name>
    <dbReference type="NCBI Taxonomy" id="471472"/>
    <lineage>
        <taxon>Bacteria</taxon>
        <taxon>Pseudomonadati</taxon>
        <taxon>Chlamydiota</taxon>
        <taxon>Chlamydiia</taxon>
        <taxon>Chlamydiales</taxon>
        <taxon>Chlamydiaceae</taxon>
        <taxon>Chlamydia/Chlamydophila group</taxon>
        <taxon>Chlamydia</taxon>
    </lineage>
</organism>
<gene>
    <name type="primary">cdu2</name>
    <name type="ordered locus">CTL0246</name>
</gene>
<accession>B0B999</accession>